<sequence>TEGPDFYIPMVNTTGVVRSPYEYPQYYLVNPAAFAVLGAYMFFLIIIGFPINFLTLYVTLEHKKLRTPLNYILLNLAVADLFMVIGGFTTTMYSSMHGYFVLGRLGCNIEGFFATLGGMISLWSLAVLAIERWVVVCKPISNFRFGENHAIMGVSLTWVMALACTVPPLVGWSRYIPEGMQCACGIDYYTRAEGYNNESFVIYMFTFHFLFPMFIIFFCYGRLLCAVKEAAAAQQESETTQRAEREVTRMVILMVIGYLVCWLPYASVAWFIFTHKGSEFGPLFMAVPSFFAKSSSIYNPIIYICMNKQFRQCMITTLFCGKNPFEGQEEDSSTKTEASSASSVSPA</sequence>
<proteinExistence type="evidence at transcript level"/>
<dbReference type="EMBL" id="U57545">
    <property type="protein sequence ID" value="AAB39534.1"/>
    <property type="molecule type" value="mRNA"/>
</dbReference>
<dbReference type="SMR" id="P79911"/>
<dbReference type="GlyCosmos" id="P79911">
    <property type="glycosylation" value="2 sites, No reported glycans"/>
</dbReference>
<dbReference type="GO" id="GO:0016020">
    <property type="term" value="C:membrane"/>
    <property type="evidence" value="ECO:0000250"/>
    <property type="project" value="UniProtKB"/>
</dbReference>
<dbReference type="GO" id="GO:0097381">
    <property type="term" value="C:photoreceptor disc membrane"/>
    <property type="evidence" value="ECO:0000250"/>
    <property type="project" value="UniProtKB"/>
</dbReference>
<dbReference type="GO" id="GO:0005886">
    <property type="term" value="C:plasma membrane"/>
    <property type="evidence" value="ECO:0000250"/>
    <property type="project" value="UniProtKB"/>
</dbReference>
<dbReference type="GO" id="GO:0005502">
    <property type="term" value="F:11-cis retinal binding"/>
    <property type="evidence" value="ECO:0000250"/>
    <property type="project" value="UniProtKB"/>
</dbReference>
<dbReference type="GO" id="GO:0008020">
    <property type="term" value="F:G protein-coupled photoreceptor activity"/>
    <property type="evidence" value="ECO:0000250"/>
    <property type="project" value="UniProtKB"/>
</dbReference>
<dbReference type="GO" id="GO:0016038">
    <property type="term" value="P:absorption of visible light"/>
    <property type="evidence" value="ECO:0000250"/>
    <property type="project" value="UniProtKB"/>
</dbReference>
<dbReference type="GO" id="GO:0016056">
    <property type="term" value="P:G protein-coupled opsin signaling pathway"/>
    <property type="evidence" value="ECO:0000250"/>
    <property type="project" value="UniProtKB"/>
</dbReference>
<dbReference type="GO" id="GO:0007601">
    <property type="term" value="P:visual perception"/>
    <property type="evidence" value="ECO:0007669"/>
    <property type="project" value="UniProtKB-KW"/>
</dbReference>
<dbReference type="CDD" id="cd15080">
    <property type="entry name" value="7tmA_MWS_opsin"/>
    <property type="match status" value="1"/>
</dbReference>
<dbReference type="FunFam" id="1.20.1070.10:FF:000018">
    <property type="entry name" value="Rhodopsin"/>
    <property type="match status" value="1"/>
</dbReference>
<dbReference type="Gene3D" id="1.20.1070.10">
    <property type="entry name" value="Rhodopsin 7-helix transmembrane proteins"/>
    <property type="match status" value="1"/>
</dbReference>
<dbReference type="InterPro" id="IPR050125">
    <property type="entry name" value="GPCR_opsins"/>
</dbReference>
<dbReference type="InterPro" id="IPR000276">
    <property type="entry name" value="GPCR_Rhodpsn"/>
</dbReference>
<dbReference type="InterPro" id="IPR017452">
    <property type="entry name" value="GPCR_Rhodpsn_7TM"/>
</dbReference>
<dbReference type="InterPro" id="IPR001760">
    <property type="entry name" value="Opsin"/>
</dbReference>
<dbReference type="InterPro" id="IPR027430">
    <property type="entry name" value="Retinal_BS"/>
</dbReference>
<dbReference type="InterPro" id="IPR000732">
    <property type="entry name" value="Rhodopsin"/>
</dbReference>
<dbReference type="InterPro" id="IPR019477">
    <property type="entry name" value="Rhodopsin_N"/>
</dbReference>
<dbReference type="PANTHER" id="PTHR24240">
    <property type="entry name" value="OPSIN"/>
    <property type="match status" value="1"/>
</dbReference>
<dbReference type="Pfam" id="PF00001">
    <property type="entry name" value="7tm_1"/>
    <property type="match status" value="1"/>
</dbReference>
<dbReference type="Pfam" id="PF10413">
    <property type="entry name" value="Rhodopsin_N"/>
    <property type="match status" value="1"/>
</dbReference>
<dbReference type="PRINTS" id="PR00237">
    <property type="entry name" value="GPCRRHODOPSN"/>
</dbReference>
<dbReference type="PRINTS" id="PR00238">
    <property type="entry name" value="OPSIN"/>
</dbReference>
<dbReference type="PRINTS" id="PR00579">
    <property type="entry name" value="RHODOPSIN"/>
</dbReference>
<dbReference type="SUPFAM" id="SSF81321">
    <property type="entry name" value="Family A G protein-coupled receptor-like"/>
    <property type="match status" value="1"/>
</dbReference>
<dbReference type="PROSITE" id="PS00237">
    <property type="entry name" value="G_PROTEIN_RECEP_F1_1"/>
    <property type="match status" value="1"/>
</dbReference>
<dbReference type="PROSITE" id="PS50262">
    <property type="entry name" value="G_PROTEIN_RECEP_F1_2"/>
    <property type="match status" value="1"/>
</dbReference>
<dbReference type="PROSITE" id="PS00238">
    <property type="entry name" value="OPSIN"/>
    <property type="match status" value="1"/>
</dbReference>
<comment type="function">
    <text evidence="1 2 3">Photoreceptor required for image-forming vision at low light intensity. While most salt water fish species use retinal as chromophore, most freshwater fish use 3-dehydroretinal, or a mixture of retinal and 3-dehydroretinal (By similarity). Light-induced isomerization of 11-cis to all-trans retinal triggers a conformational change that activates signaling via G-proteins. Subsequent receptor phosphorylation mediates displacement of the bound G-protein alpha subunit by arrestin and terminates signaling (By similarity).</text>
</comment>
<comment type="subcellular location">
    <subcellularLocation>
        <location evidence="2">Membrane</location>
        <topology evidence="2">Multi-pass membrane protein</topology>
    </subcellularLocation>
    <subcellularLocation>
        <location evidence="4">Cell projection</location>
        <location evidence="4">Cilium</location>
        <location evidence="4">Photoreceptor outer segment</location>
    </subcellularLocation>
    <text evidence="2">Synthesized in the inner segment (IS) of rod photoreceptor cells before vectorial transport to disk membranes in the rod outer segment (OS) photosensory cilia.</text>
</comment>
<comment type="PTM">
    <text evidence="1">Phosphorylated on some or all of the serine and threonine residues present in the C-terminal region.</text>
</comment>
<comment type="PTM">
    <text evidence="1">Contains one covalently linked retinal chromophore.</text>
</comment>
<comment type="similarity">
    <text evidence="6">Belongs to the G-protein coupled receptor 1 family. Opsin subfamily.</text>
</comment>
<organism>
    <name type="scientific">Sargocentron tiere</name>
    <name type="common">Blue lined squirrelfish</name>
    <name type="synonym">Adioryx tiere</name>
    <dbReference type="NCBI Taxonomy" id="47713"/>
    <lineage>
        <taxon>Eukaryota</taxon>
        <taxon>Metazoa</taxon>
        <taxon>Chordata</taxon>
        <taxon>Craniata</taxon>
        <taxon>Vertebrata</taxon>
        <taxon>Euteleostomi</taxon>
        <taxon>Actinopterygii</taxon>
        <taxon>Neopterygii</taxon>
        <taxon>Teleostei</taxon>
        <taxon>Neoteleostei</taxon>
        <taxon>Acanthomorphata</taxon>
        <taxon>Holocentriformes</taxon>
        <taxon>Holocentridae</taxon>
        <taxon>Sargocentron</taxon>
    </lineage>
</organism>
<name>OPSD_SARTI</name>
<gene>
    <name type="primary">rho</name>
</gene>
<protein>
    <recommendedName>
        <fullName>Rhodopsin</fullName>
    </recommendedName>
</protein>
<feature type="chain" id="PRO_0000197716" description="Rhodopsin">
    <location>
        <begin position="1" status="less than"/>
        <end position="347"/>
    </location>
</feature>
<feature type="topological domain" description="Extracellular" evidence="8">
    <location>
        <begin position="1" status="less than"/>
        <end position="33"/>
    </location>
</feature>
<feature type="transmembrane region" description="Helical; Name=1" evidence="1">
    <location>
        <begin position="34"/>
        <end position="58"/>
    </location>
</feature>
<feature type="topological domain" description="Cytoplasmic" evidence="8">
    <location>
        <begin position="59"/>
        <end position="70"/>
    </location>
</feature>
<feature type="transmembrane region" description="Helical; Name=2" evidence="1">
    <location>
        <begin position="71"/>
        <end position="93"/>
    </location>
</feature>
<feature type="topological domain" description="Extracellular" evidence="8">
    <location>
        <begin position="94"/>
        <end position="107"/>
    </location>
</feature>
<feature type="transmembrane region" description="Helical; Name=3" evidence="1">
    <location>
        <begin position="108"/>
        <end position="130"/>
    </location>
</feature>
<feature type="topological domain" description="Cytoplasmic" evidence="8">
    <location>
        <begin position="131"/>
        <end position="149"/>
    </location>
</feature>
<feature type="transmembrane region" description="Helical; Name=4" evidence="1">
    <location>
        <begin position="150"/>
        <end position="170"/>
    </location>
</feature>
<feature type="topological domain" description="Extracellular" evidence="8">
    <location>
        <begin position="171"/>
        <end position="199"/>
    </location>
</feature>
<feature type="transmembrane region" description="Helical; Name=5" evidence="1">
    <location>
        <begin position="200"/>
        <end position="221"/>
    </location>
</feature>
<feature type="topological domain" description="Cytoplasmic" evidence="8">
    <location>
        <begin position="222"/>
        <end position="249"/>
    </location>
</feature>
<feature type="transmembrane region" description="Helical; Name=6" evidence="1">
    <location>
        <begin position="250"/>
        <end position="271"/>
    </location>
</feature>
<feature type="topological domain" description="Extracellular" evidence="8">
    <location>
        <begin position="272"/>
        <end position="283"/>
    </location>
</feature>
<feature type="transmembrane region" description="Helical; Name=7" evidence="1">
    <location>
        <begin position="284"/>
        <end position="305"/>
    </location>
</feature>
<feature type="topological domain" description="Cytoplasmic" evidence="8">
    <location>
        <begin position="306"/>
        <end position="347"/>
    </location>
</feature>
<feature type="region of interest" description="Disordered" evidence="7">
    <location>
        <begin position="326"/>
        <end position="347"/>
    </location>
</feature>
<feature type="short sequence motif" description="'Ionic lock' involved in activated form stabilization" evidence="1">
    <location>
        <begin position="131"/>
        <end position="133"/>
    </location>
</feature>
<feature type="compositionally biased region" description="Low complexity" evidence="7">
    <location>
        <begin position="335"/>
        <end position="347"/>
    </location>
</feature>
<feature type="site" description="Plays an important role in the conformation switch to the active conformation" evidence="1">
    <location>
        <position position="110"/>
    </location>
</feature>
<feature type="modified residue" description="N6-(retinylidene)lysine" evidence="1">
    <location>
        <position position="293"/>
    </location>
</feature>
<feature type="lipid moiety-binding region" description="S-palmitoyl cysteine" evidence="1">
    <location>
        <position position="320"/>
    </location>
</feature>
<feature type="glycosylation site" description="N-linked (GlcNAc...) asparagine" evidence="5">
    <location>
        <position position="12"/>
    </location>
</feature>
<feature type="glycosylation site" description="N-linked (GlcNAc...) asparagine" evidence="5">
    <location>
        <position position="197"/>
    </location>
</feature>
<feature type="disulfide bond" evidence="6">
    <location>
        <begin position="107"/>
        <end position="184"/>
    </location>
</feature>
<feature type="non-terminal residue">
    <location>
        <position position="1"/>
    </location>
</feature>
<accession>P79911</accession>
<reference key="1">
    <citation type="submission" date="1997-01" db="EMBL/GenBank/DDBJ databases">
        <title>Molecular phylogeny of 11 holocentrid fishes (Order Beryciformes) inferred from rhodopsin cDNA and cytochrome b.</title>
        <authorList>
            <person name="Toller W.W."/>
            <person name="Moses K."/>
            <person name="McFall-Ngai M.J."/>
        </authorList>
    </citation>
    <scope>NUCLEOTIDE SEQUENCE [MRNA]</scope>
    <source>
        <tissue>Eye</tissue>
    </source>
</reference>
<keyword id="KW-0966">Cell projection</keyword>
<keyword id="KW-0157">Chromophore</keyword>
<keyword id="KW-1015">Disulfide bond</keyword>
<keyword id="KW-0297">G-protein coupled receptor</keyword>
<keyword id="KW-0325">Glycoprotein</keyword>
<keyword id="KW-0449">Lipoprotein</keyword>
<keyword id="KW-0472">Membrane</keyword>
<keyword id="KW-0564">Palmitate</keyword>
<keyword id="KW-0597">Phosphoprotein</keyword>
<keyword id="KW-0600">Photoreceptor protein</keyword>
<keyword id="KW-0675">Receptor</keyword>
<keyword id="KW-0681">Retinal protein</keyword>
<keyword id="KW-0716">Sensory transduction</keyword>
<keyword id="KW-0807">Transducer</keyword>
<keyword id="KW-0812">Transmembrane</keyword>
<keyword id="KW-1133">Transmembrane helix</keyword>
<keyword id="KW-0844">Vision</keyword>
<evidence type="ECO:0000250" key="1">
    <source>
        <dbReference type="UniProtKB" id="P02699"/>
    </source>
</evidence>
<evidence type="ECO:0000250" key="2">
    <source>
        <dbReference type="UniProtKB" id="P08100"/>
    </source>
</evidence>
<evidence type="ECO:0000250" key="3">
    <source>
        <dbReference type="UniProtKB" id="P32309"/>
    </source>
</evidence>
<evidence type="ECO:0000250" key="4">
    <source>
        <dbReference type="UniProtKB" id="P35359"/>
    </source>
</evidence>
<evidence type="ECO:0000255" key="5"/>
<evidence type="ECO:0000255" key="6">
    <source>
        <dbReference type="PROSITE-ProRule" id="PRU00521"/>
    </source>
</evidence>
<evidence type="ECO:0000256" key="7">
    <source>
        <dbReference type="SAM" id="MobiDB-lite"/>
    </source>
</evidence>
<evidence type="ECO:0000305" key="8"/>